<feature type="chain" id="PRO_0000436291" description="Transcription factor mokH">
    <location>
        <begin position="1"/>
        <end position="455"/>
    </location>
</feature>
<feature type="DNA-binding region" description="Zn(2)-C6 fungal-type" evidence="2">
    <location>
        <begin position="26"/>
        <end position="58"/>
    </location>
</feature>
<feature type="region of interest" description="Disordered" evidence="3">
    <location>
        <begin position="1"/>
        <end position="22"/>
    </location>
</feature>
<feature type="region of interest" description="Disordered" evidence="3">
    <location>
        <begin position="68"/>
        <end position="113"/>
    </location>
</feature>
<feature type="region of interest" description="Disordered" evidence="3">
    <location>
        <begin position="296"/>
        <end position="317"/>
    </location>
</feature>
<feature type="compositionally biased region" description="Polar residues" evidence="3">
    <location>
        <begin position="75"/>
        <end position="88"/>
    </location>
</feature>
<feature type="compositionally biased region" description="Low complexity" evidence="3">
    <location>
        <begin position="89"/>
        <end position="113"/>
    </location>
</feature>
<evidence type="ECO:0000250" key="1">
    <source>
        <dbReference type="UniProtKB" id="Q0C8M2"/>
    </source>
</evidence>
<evidence type="ECO:0000255" key="2">
    <source>
        <dbReference type="PROSITE-ProRule" id="PRU00227"/>
    </source>
</evidence>
<evidence type="ECO:0000256" key="3">
    <source>
        <dbReference type="SAM" id="MobiDB-lite"/>
    </source>
</evidence>
<evidence type="ECO:0000269" key="4">
    <source>
    </source>
</evidence>
<evidence type="ECO:0000269" key="5">
    <source>
    </source>
</evidence>
<evidence type="ECO:0000303" key="6">
    <source>
    </source>
</evidence>
<evidence type="ECO:0000312" key="7">
    <source>
        <dbReference type="EMBL" id="ABA02246.1"/>
    </source>
</evidence>
<sequence length="455" mass="49306">MALSPVQDPPSHTDKTMPRRAFRRSCDRCHAQKIKCIGSEGAVARASCQRCQQAGLRCVYSERCPKRKLPKPNPAESSPASSTAGLHTSSSDSSPPVPSDGLPLDLPGPDSSGVSLQFLDPSADCDWPWSSIGVDETVVNNCLDLSHGHGHGDLSCQLELPMPDLPSPFEFSAEKSPSPSVSGSIAGAVSAQRELFDGLSTVSQELEAILLAVAVEWPKQEIWTYPIGTFFNASRRLLVYLQQQSNTRSDQGMLNECLRTKNLFMAVHCYMLIVKIFTSLSELLLSQIRHSQAGQLTPLEGHQFEPPPSSSRDRSSVDTMPIFNPNLHIGGLFSYLNPFMHALSSACTTLRVGVQLLRENESALGIPPAQGVAASVSMGKEEWADGEDVASAVTTADEDLRQPASRILSMVWSDEVGDQKAKSADAAGPRSRTLAVLRRCNREIFSLARQHNLAS</sequence>
<comment type="function">
    <text evidence="1 4 6">Transcription factor that regulates the gene cluster that mediates the biosynthesis of monakolin K, also known as lovastatin, and which acts as a potent competitive inhibitor of HMG-CoA reductase (PubMed:18578535, PubMed:19693441, PubMed:19968298). Monakolin K biosynthesis is performed in two stages (PubMed:19693441). The first stage is catalyzed by the nonaketide synthase mokA, which belongs to type I polyketide synthases and catalyzes the iterative nine-step formation of the polyketide (PubMed:18578535, PubMed:19693441). This PKS stage is completed by the action of dehydrogenase mokE, which catalyzes the NADPH-dependent reduction of the unsaturated tetra-, penta- and heptaketide intermediates that arise during the mokA-mediated biosynthesis of the nonaketide chain and leads to dihydromonacolin L (PubMed:19693441). Covalently bound dihydromonacolin L is released from mokA by the mokD esterase (By similarity). Conversion of dihydromonacolin L into monacolin L and then monacolin J is subsequently performed with the participation of molecular oxygen and P450 monoogygenase mokC (PubMed:19693441). Finally, mokF performs the conversion of monacoline J to monacoline K through the addition of the side-chain diketide moiety (2R)-2-methylbutanoate produced by the diketide synthase mokB (PubMed:19693441). HMG-CoA reductase mokG may act as a down-regulator of monacolin K production (PubMed:18578535).</text>
</comment>
<comment type="subcellular location">
    <subcellularLocation>
        <location evidence="2">Nucleus</location>
    </subcellularLocation>
</comment>
<comment type="biotechnology">
    <text evidence="5">Monacoline K acts as an inhibitor of HMG-CoA reductase involved in cholesterogenesis (PubMed:21821946). Its hypocholesterolemic activity might be useful for lowering cholesterol levels in the blood and reduce artherosclerosis and coronary heart disease (PubMed:21821946).</text>
</comment>
<gene>
    <name evidence="6" type="primary">mokH</name>
</gene>
<dbReference type="EMBL" id="DQ176595">
    <property type="protein sequence ID" value="ABA02246.1"/>
    <property type="molecule type" value="Genomic_DNA"/>
</dbReference>
<dbReference type="GO" id="GO:0005634">
    <property type="term" value="C:nucleus"/>
    <property type="evidence" value="ECO:0007669"/>
    <property type="project" value="UniProtKB-SubCell"/>
</dbReference>
<dbReference type="GO" id="GO:0003677">
    <property type="term" value="F:DNA binding"/>
    <property type="evidence" value="ECO:0007669"/>
    <property type="project" value="UniProtKB-KW"/>
</dbReference>
<dbReference type="GO" id="GO:0000981">
    <property type="term" value="F:DNA-binding transcription factor activity, RNA polymerase II-specific"/>
    <property type="evidence" value="ECO:0007669"/>
    <property type="project" value="InterPro"/>
</dbReference>
<dbReference type="GO" id="GO:0008270">
    <property type="term" value="F:zinc ion binding"/>
    <property type="evidence" value="ECO:0007669"/>
    <property type="project" value="InterPro"/>
</dbReference>
<dbReference type="CDD" id="cd00067">
    <property type="entry name" value="GAL4"/>
    <property type="match status" value="1"/>
</dbReference>
<dbReference type="Gene3D" id="4.10.240.10">
    <property type="entry name" value="Zn(2)-C6 fungal-type DNA-binding domain"/>
    <property type="match status" value="1"/>
</dbReference>
<dbReference type="InterPro" id="IPR036864">
    <property type="entry name" value="Zn2-C6_fun-type_DNA-bd_sf"/>
</dbReference>
<dbReference type="InterPro" id="IPR001138">
    <property type="entry name" value="Zn2Cys6_DnaBD"/>
</dbReference>
<dbReference type="Pfam" id="PF00172">
    <property type="entry name" value="Zn_clus"/>
    <property type="match status" value="1"/>
</dbReference>
<dbReference type="SMART" id="SM00066">
    <property type="entry name" value="GAL4"/>
    <property type="match status" value="1"/>
</dbReference>
<dbReference type="SUPFAM" id="SSF57701">
    <property type="entry name" value="Zn2/Cys6 DNA-binding domain"/>
    <property type="match status" value="1"/>
</dbReference>
<dbReference type="PROSITE" id="PS00463">
    <property type="entry name" value="ZN2_CY6_FUNGAL_1"/>
    <property type="match status" value="1"/>
</dbReference>
<dbReference type="PROSITE" id="PS50048">
    <property type="entry name" value="ZN2_CY6_FUNGAL_2"/>
    <property type="match status" value="1"/>
</dbReference>
<name>MOKH_MONPI</name>
<keyword id="KW-0238">DNA-binding</keyword>
<keyword id="KW-0479">Metal-binding</keyword>
<keyword id="KW-0539">Nucleus</keyword>
<keyword id="KW-0804">Transcription</keyword>
<keyword id="KW-0805">Transcription regulation</keyword>
<keyword id="KW-0862">Zinc</keyword>
<accession>Q3S2U4</accession>
<organism evidence="7">
    <name type="scientific">Monascus pilosus</name>
    <name type="common">Red mold</name>
    <dbReference type="NCBI Taxonomy" id="89488"/>
    <lineage>
        <taxon>Eukaryota</taxon>
        <taxon>Fungi</taxon>
        <taxon>Dikarya</taxon>
        <taxon>Ascomycota</taxon>
        <taxon>Pezizomycotina</taxon>
        <taxon>Eurotiomycetes</taxon>
        <taxon>Eurotiomycetidae</taxon>
        <taxon>Eurotiales</taxon>
        <taxon>Aspergillaceae</taxon>
        <taxon>Monascus</taxon>
    </lineage>
</organism>
<proteinExistence type="evidence at protein level"/>
<reference key="1">
    <citation type="journal article" date="2008" name="J. Agric. Food Chem.">
        <title>Cloning and characterization of monacolin K biosynthetic gene cluster from Monascus pilosus.</title>
        <authorList>
            <person name="Chen Y.P."/>
            <person name="Tseng C.P."/>
            <person name="Liaw L.L."/>
            <person name="Wang C.L."/>
            <person name="Chen I.C."/>
            <person name="Wu W.J."/>
            <person name="Wu M.D."/>
            <person name="Yuan G.F."/>
        </authorList>
    </citation>
    <scope>NUCLEOTIDE SEQUENCE [GENOMIC DNA]</scope>
    <scope>FUNCTION</scope>
</reference>
<reference key="2">
    <citation type="journal article" date="2009" name="Biotechnol. Lett.">
        <title>Identification of mokB involved in monacolin K biosynthesis in Monascus pilosus.</title>
        <authorList>
            <person name="Sakai K."/>
            <person name="Kinoshita H."/>
            <person name="Nihira T."/>
        </authorList>
    </citation>
    <scope>FUNCTION</scope>
</reference>
<reference key="3">
    <citation type="journal article" date="2010" name="J. Agric. Food Chem.">
        <title>Identification of the mokH gene encoding transcription factor for the upregulation of monacolin K biosynthesis in Monascus pilosus.</title>
        <authorList>
            <person name="Chen Y.-P."/>
            <person name="Yuan G.-F."/>
            <person name="Hsieh S.-Y."/>
            <person name="Lin Y.-S."/>
            <person name="Wang W.-Y."/>
            <person name="Liaw L.-L."/>
            <person name="Tseng C.-P."/>
        </authorList>
    </citation>
    <scope>FUNCTION</scope>
</reference>
<reference key="4">
    <citation type="journal article" date="2011" name="Biosci. Biotechnol. Biochem.">
        <title>Simultaneous enrichment of deglycosylated ginsenosides and monacolin K in red ginseng by fermentation with Monascus pilosus.</title>
        <authorList>
            <person name="Hong S.Y."/>
            <person name="Oh J.H."/>
            <person name="Lee I."/>
        </authorList>
    </citation>
    <scope>BIOTECHNOLOGY</scope>
</reference>
<protein>
    <recommendedName>
        <fullName evidence="6">Transcription factor mokH</fullName>
    </recommendedName>
    <alternativeName>
        <fullName evidence="6">Monacolin K biosynthesis protein H</fullName>
    </alternativeName>
</protein>